<organism>
    <name type="scientific">Legionella pneumophila subsp. pneumophila (strain Philadelphia 1 / ATCC 33152 / DSM 7513)</name>
    <dbReference type="NCBI Taxonomy" id="272624"/>
    <lineage>
        <taxon>Bacteria</taxon>
        <taxon>Pseudomonadati</taxon>
        <taxon>Pseudomonadota</taxon>
        <taxon>Gammaproteobacteria</taxon>
        <taxon>Legionellales</taxon>
        <taxon>Legionellaceae</taxon>
        <taxon>Legionella</taxon>
    </lineage>
</organism>
<comment type="function">
    <text evidence="1">This is one of the proteins that binds to the 5S RNA in the ribosome where it forms part of the central protuberance.</text>
</comment>
<comment type="subunit">
    <text evidence="1">Part of the 50S ribosomal subunit; part of the 5S rRNA/L5/L18/L25 subcomplex. Contacts the 5S rRNA. Binds to the 5S rRNA independently of L5 and L18.</text>
</comment>
<comment type="similarity">
    <text evidence="1">Belongs to the bacterial ribosomal protein bL25 family. CTC subfamily.</text>
</comment>
<sequence length="219" mass="23987">MSTIQLEAQSRTDMGKGASRRLRRLENKVPAVIYGGSKKPMAIHFSHNKVIKALETESIYSSVFDITVDGKVEHVILKALQRHPYKPIVLHMDLQRVSSKDILVKLVPVHFINEEQSPGIKAGGIVQHTMTQVEIRCQAKDLPEFIEVDMSKVGMDDVVHLSDLKLPKGVQLTVDVADGSHDAPVVSIHAAKVSSTELEETPEVPASAVPTTDQGESAE</sequence>
<accession>Q5ZS67</accession>
<name>RL25_LEGPH</name>
<evidence type="ECO:0000255" key="1">
    <source>
        <dbReference type="HAMAP-Rule" id="MF_01334"/>
    </source>
</evidence>
<evidence type="ECO:0000256" key="2">
    <source>
        <dbReference type="SAM" id="MobiDB-lite"/>
    </source>
</evidence>
<evidence type="ECO:0000305" key="3"/>
<protein>
    <recommendedName>
        <fullName evidence="1">Large ribosomal subunit protein bL25</fullName>
    </recommendedName>
    <alternativeName>
        <fullName evidence="3">50S ribosomal protein L25</fullName>
    </alternativeName>
    <alternativeName>
        <fullName evidence="1">General stress protein CTC</fullName>
    </alternativeName>
</protein>
<feature type="chain" id="PRO_0000181558" description="Large ribosomal subunit protein bL25">
    <location>
        <begin position="1"/>
        <end position="219"/>
    </location>
</feature>
<feature type="region of interest" description="Disordered" evidence="2">
    <location>
        <begin position="194"/>
        <end position="219"/>
    </location>
</feature>
<feature type="compositionally biased region" description="Polar residues" evidence="2">
    <location>
        <begin position="209"/>
        <end position="219"/>
    </location>
</feature>
<reference key="1">
    <citation type="journal article" date="2004" name="Science">
        <title>The genomic sequence of the accidental pathogen Legionella pneumophila.</title>
        <authorList>
            <person name="Chien M."/>
            <person name="Morozova I."/>
            <person name="Shi S."/>
            <person name="Sheng H."/>
            <person name="Chen J."/>
            <person name="Gomez S.M."/>
            <person name="Asamani G."/>
            <person name="Hill K."/>
            <person name="Nuara J."/>
            <person name="Feder M."/>
            <person name="Rineer J."/>
            <person name="Greenberg J.J."/>
            <person name="Steshenko V."/>
            <person name="Park S.H."/>
            <person name="Zhao B."/>
            <person name="Teplitskaya E."/>
            <person name="Edwards J.R."/>
            <person name="Pampou S."/>
            <person name="Georghiou A."/>
            <person name="Chou I.-C."/>
            <person name="Iannuccilli W."/>
            <person name="Ulz M.E."/>
            <person name="Kim D.H."/>
            <person name="Geringer-Sameth A."/>
            <person name="Goldsberry C."/>
            <person name="Morozov P."/>
            <person name="Fischer S.G."/>
            <person name="Segal G."/>
            <person name="Qu X."/>
            <person name="Rzhetsky A."/>
            <person name="Zhang P."/>
            <person name="Cayanis E."/>
            <person name="De Jong P.J."/>
            <person name="Ju J."/>
            <person name="Kalachikov S."/>
            <person name="Shuman H.A."/>
            <person name="Russo J.J."/>
        </authorList>
    </citation>
    <scope>NUCLEOTIDE SEQUENCE [LARGE SCALE GENOMIC DNA]</scope>
    <source>
        <strain>Philadelphia 1 / ATCC 33152 / DSM 7513</strain>
    </source>
</reference>
<keyword id="KW-1185">Reference proteome</keyword>
<keyword id="KW-0687">Ribonucleoprotein</keyword>
<keyword id="KW-0689">Ribosomal protein</keyword>
<keyword id="KW-0694">RNA-binding</keyword>
<keyword id="KW-0699">rRNA-binding</keyword>
<gene>
    <name evidence="1" type="primary">rplY</name>
    <name evidence="1" type="synonym">ctc</name>
    <name type="ordered locus">lpg2652</name>
</gene>
<proteinExistence type="inferred from homology"/>
<dbReference type="EMBL" id="AE017354">
    <property type="protein sequence ID" value="AAU28710.1"/>
    <property type="molecule type" value="Genomic_DNA"/>
</dbReference>
<dbReference type="RefSeq" id="WP_010948352.1">
    <property type="nucleotide sequence ID" value="NC_002942.5"/>
</dbReference>
<dbReference type="RefSeq" id="YP_096657.1">
    <property type="nucleotide sequence ID" value="NC_002942.5"/>
</dbReference>
<dbReference type="SMR" id="Q5ZS67"/>
<dbReference type="STRING" id="272624.lpg2652"/>
<dbReference type="PaxDb" id="272624-lpg2652"/>
<dbReference type="KEGG" id="lpn:lpg2652"/>
<dbReference type="PATRIC" id="fig|272624.6.peg.2830"/>
<dbReference type="eggNOG" id="COG1825">
    <property type="taxonomic scope" value="Bacteria"/>
</dbReference>
<dbReference type="HOGENOM" id="CLU_075939_0_1_6"/>
<dbReference type="OrthoDB" id="9806411at2"/>
<dbReference type="Proteomes" id="UP000000609">
    <property type="component" value="Chromosome"/>
</dbReference>
<dbReference type="GO" id="GO:0022625">
    <property type="term" value="C:cytosolic large ribosomal subunit"/>
    <property type="evidence" value="ECO:0007669"/>
    <property type="project" value="TreeGrafter"/>
</dbReference>
<dbReference type="GO" id="GO:0008097">
    <property type="term" value="F:5S rRNA binding"/>
    <property type="evidence" value="ECO:0007669"/>
    <property type="project" value="InterPro"/>
</dbReference>
<dbReference type="GO" id="GO:0003735">
    <property type="term" value="F:structural constituent of ribosome"/>
    <property type="evidence" value="ECO:0007669"/>
    <property type="project" value="InterPro"/>
</dbReference>
<dbReference type="GO" id="GO:0006412">
    <property type="term" value="P:translation"/>
    <property type="evidence" value="ECO:0007669"/>
    <property type="project" value="UniProtKB-UniRule"/>
</dbReference>
<dbReference type="CDD" id="cd00495">
    <property type="entry name" value="Ribosomal_L25_TL5_CTC"/>
    <property type="match status" value="1"/>
</dbReference>
<dbReference type="FunFam" id="2.40.240.10:FF:000002">
    <property type="entry name" value="50S ribosomal protein L25"/>
    <property type="match status" value="1"/>
</dbReference>
<dbReference type="Gene3D" id="2.170.120.20">
    <property type="entry name" value="Ribosomal protein L25, beta domain"/>
    <property type="match status" value="1"/>
</dbReference>
<dbReference type="Gene3D" id="2.40.240.10">
    <property type="entry name" value="Ribosomal Protein L25, Chain P"/>
    <property type="match status" value="1"/>
</dbReference>
<dbReference type="HAMAP" id="MF_01334">
    <property type="entry name" value="Ribosomal_bL25_CTC"/>
    <property type="match status" value="1"/>
</dbReference>
<dbReference type="InterPro" id="IPR020056">
    <property type="entry name" value="Rbsml_bL25/Gln-tRNA_synth_N"/>
</dbReference>
<dbReference type="InterPro" id="IPR011035">
    <property type="entry name" value="Ribosomal_bL25/Gln-tRNA_synth"/>
</dbReference>
<dbReference type="InterPro" id="IPR020057">
    <property type="entry name" value="Ribosomal_bL25_b-dom"/>
</dbReference>
<dbReference type="InterPro" id="IPR037121">
    <property type="entry name" value="Ribosomal_bL25_C"/>
</dbReference>
<dbReference type="InterPro" id="IPR001021">
    <property type="entry name" value="Ribosomal_bL25_long"/>
</dbReference>
<dbReference type="InterPro" id="IPR029751">
    <property type="entry name" value="Ribosomal_L25_dom"/>
</dbReference>
<dbReference type="InterPro" id="IPR020930">
    <property type="entry name" value="Ribosomal_uL5_bac-type"/>
</dbReference>
<dbReference type="NCBIfam" id="TIGR00731">
    <property type="entry name" value="bL25_bact_ctc"/>
    <property type="match status" value="1"/>
</dbReference>
<dbReference type="NCBIfam" id="NF004128">
    <property type="entry name" value="PRK05618.1-2"/>
    <property type="match status" value="1"/>
</dbReference>
<dbReference type="NCBIfam" id="NF004130">
    <property type="entry name" value="PRK05618.1-5"/>
    <property type="match status" value="1"/>
</dbReference>
<dbReference type="NCBIfam" id="NF004612">
    <property type="entry name" value="PRK05943.1"/>
    <property type="match status" value="1"/>
</dbReference>
<dbReference type="PANTHER" id="PTHR33284">
    <property type="entry name" value="RIBOSOMAL PROTEIN L25/GLN-TRNA SYNTHETASE, ANTI-CODON-BINDING DOMAIN-CONTAINING PROTEIN"/>
    <property type="match status" value="1"/>
</dbReference>
<dbReference type="PANTHER" id="PTHR33284:SF1">
    <property type="entry name" value="RIBOSOMAL PROTEIN L25_GLN-TRNA SYNTHETASE, ANTI-CODON-BINDING DOMAIN-CONTAINING PROTEIN"/>
    <property type="match status" value="1"/>
</dbReference>
<dbReference type="Pfam" id="PF01386">
    <property type="entry name" value="Ribosomal_L25p"/>
    <property type="match status" value="1"/>
</dbReference>
<dbReference type="Pfam" id="PF14693">
    <property type="entry name" value="Ribosomal_TL5_C"/>
    <property type="match status" value="1"/>
</dbReference>
<dbReference type="SUPFAM" id="SSF50715">
    <property type="entry name" value="Ribosomal protein L25-like"/>
    <property type="match status" value="1"/>
</dbReference>